<comment type="function">
    <text evidence="1">Part of the Sec protein translocase complex. Interacts with the SecYEG preprotein conducting channel. Has a central role in coupling the hydrolysis of ATP to the transfer of proteins into and across the cell membrane, serving both as a receptor for the preprotein-SecB complex and as an ATP-driven molecular motor driving the stepwise translocation of polypeptide chains across the membrane.</text>
</comment>
<comment type="catalytic activity">
    <reaction evidence="1">
        <text>ATP + H2O + cellular proteinSide 1 = ADP + phosphate + cellular proteinSide 2.</text>
        <dbReference type="EC" id="7.4.2.8"/>
    </reaction>
</comment>
<comment type="cofactor">
    <cofactor evidence="1">
        <name>Zn(2+)</name>
        <dbReference type="ChEBI" id="CHEBI:29105"/>
    </cofactor>
    <text evidence="1">May bind 1 zinc ion per subunit.</text>
</comment>
<comment type="subunit">
    <text evidence="1">Monomer and homodimer. Part of the essential Sec protein translocation apparatus which comprises SecA, SecYEG and auxiliary proteins SecDF-YajC and YidC.</text>
</comment>
<comment type="subcellular location">
    <subcellularLocation>
        <location evidence="1">Cell inner membrane</location>
        <topology evidence="1">Peripheral membrane protein</topology>
        <orientation evidence="1">Cytoplasmic side</orientation>
    </subcellularLocation>
    <subcellularLocation>
        <location evidence="1">Cytoplasm</location>
    </subcellularLocation>
    <text evidence="1">Distribution is 50-50.</text>
</comment>
<comment type="similarity">
    <text evidence="1">Belongs to the SecA family.</text>
</comment>
<accession>A7MXQ8</accession>
<sequence>MITKLLTKVIGSRNDRTLRRLRKIVKEINNYEPTFEALSDEELKAKTVEFRERLEQGETLDKLLPEAFATVREASKRVYGMRHFDVQLIGGMVLNGGQIAEMRTGEGKTLTATLPAYLNALPGKGVHVVTVNDYLATRDAETNRPLFEFLGMTVGVNVPNMPPQAKKEAYQADILYGTNNEFGFDYLRDNMAFRNEDRVQRERFFAVVDEVDSILIDEARTPLIISGPAEDSSDLYTRINLLIPQLQKQDKEDSEEYRGDGHYTVDEKSKQVHLTETGQEFVEELMVKNGLMEEGDTLYSPTNISLLHHVNAALRAHVLFERNVDYIVNEDGEVVIVDEHTGRTMPGRRWSEGLHQAVEAKEGVKIQNENQTLASITFQNYFRLYEKLSGMTGTADTEAFEFQSIYGLETVVIPTNKPMIRNDMPDVVYRTEAEKFAAIIEDIKERVEKGQPSLVGTVSIEKSELLSNALKKAKIKHNVLNAKFHEREAEIVAEAGTPGAVTIATNMAGRGTDIVLGGSWQAKVEALQDPTKEQIDAIKAEWKQVHDQVLESGGLHIIGTERHESRRIDNQLRGRSGRQGDAGSSRFYLSMEDSLLRIFTSDRMASLIQSGMEEGEAIESKMLSRSIEKAQRKVEGRNFDIRKQLLEYDDVANDQRKVVYELRDELMSVDDISDMIEQNREDVITAIIDEYIPPQSLEDMWDVEGLQERLKADFDLDAPIKQWLEEDDKLYEEALREKITNLAVEVYKAKEEVVGAQVLRNFEKSVMLQTLDTLWKEHLAAMDHLRQGIHLRGYAQKNPKQEYKRESFELFEGLLEALKTDVITVLSRVRVQQQEEVERMEEQRRAQAEEAARRAQAQHAAAQNPLSEGEESEEGAHQPMVREERKVGRNEPCPCGSGKKYKQCHGKID</sequence>
<reference key="1">
    <citation type="submission" date="2007-08" db="EMBL/GenBank/DDBJ databases">
        <authorList>
            <consortium name="The Vibrio harveyi Genome Sequencing Project"/>
            <person name="Bassler B."/>
            <person name="Clifton S.W."/>
            <person name="Fulton L."/>
            <person name="Delehaunty K."/>
            <person name="Fronick C."/>
            <person name="Harrison M."/>
            <person name="Markivic C."/>
            <person name="Fulton R."/>
            <person name="Tin-Wollam A.-M."/>
            <person name="Shah N."/>
            <person name="Pepin K."/>
            <person name="Nash W."/>
            <person name="Thiruvilangam P."/>
            <person name="Bhonagiri V."/>
            <person name="Waters C."/>
            <person name="Tu K.C."/>
            <person name="Irgon J."/>
            <person name="Wilson R.K."/>
        </authorList>
    </citation>
    <scope>NUCLEOTIDE SEQUENCE [LARGE SCALE GENOMIC DNA]</scope>
    <source>
        <strain>ATCC BAA-1116 / BB120</strain>
    </source>
</reference>
<dbReference type="EC" id="7.4.2.8" evidence="1"/>
<dbReference type="EMBL" id="CP000789">
    <property type="protein sequence ID" value="ABU69908.1"/>
    <property type="molecule type" value="Genomic_DNA"/>
</dbReference>
<dbReference type="RefSeq" id="WP_010646536.1">
    <property type="nucleotide sequence ID" value="NC_022269.1"/>
</dbReference>
<dbReference type="SMR" id="A7MXQ8"/>
<dbReference type="KEGG" id="vha:VIBHAR_00909"/>
<dbReference type="PATRIC" id="fig|338187.25.peg.1709"/>
<dbReference type="Proteomes" id="UP000008152">
    <property type="component" value="Chromosome I"/>
</dbReference>
<dbReference type="GO" id="GO:0031522">
    <property type="term" value="C:cell envelope Sec protein transport complex"/>
    <property type="evidence" value="ECO:0007669"/>
    <property type="project" value="TreeGrafter"/>
</dbReference>
<dbReference type="GO" id="GO:0005829">
    <property type="term" value="C:cytosol"/>
    <property type="evidence" value="ECO:0007669"/>
    <property type="project" value="TreeGrafter"/>
</dbReference>
<dbReference type="GO" id="GO:0005886">
    <property type="term" value="C:plasma membrane"/>
    <property type="evidence" value="ECO:0007669"/>
    <property type="project" value="UniProtKB-SubCell"/>
</dbReference>
<dbReference type="GO" id="GO:0005524">
    <property type="term" value="F:ATP binding"/>
    <property type="evidence" value="ECO:0007669"/>
    <property type="project" value="UniProtKB-UniRule"/>
</dbReference>
<dbReference type="GO" id="GO:0046872">
    <property type="term" value="F:metal ion binding"/>
    <property type="evidence" value="ECO:0007669"/>
    <property type="project" value="UniProtKB-KW"/>
</dbReference>
<dbReference type="GO" id="GO:0008564">
    <property type="term" value="F:protein-exporting ATPase activity"/>
    <property type="evidence" value="ECO:0007669"/>
    <property type="project" value="UniProtKB-EC"/>
</dbReference>
<dbReference type="GO" id="GO:0065002">
    <property type="term" value="P:intracellular protein transmembrane transport"/>
    <property type="evidence" value="ECO:0007669"/>
    <property type="project" value="UniProtKB-UniRule"/>
</dbReference>
<dbReference type="GO" id="GO:0017038">
    <property type="term" value="P:protein import"/>
    <property type="evidence" value="ECO:0007669"/>
    <property type="project" value="InterPro"/>
</dbReference>
<dbReference type="GO" id="GO:0006605">
    <property type="term" value="P:protein targeting"/>
    <property type="evidence" value="ECO:0007669"/>
    <property type="project" value="UniProtKB-UniRule"/>
</dbReference>
<dbReference type="GO" id="GO:0043952">
    <property type="term" value="P:protein transport by the Sec complex"/>
    <property type="evidence" value="ECO:0007669"/>
    <property type="project" value="TreeGrafter"/>
</dbReference>
<dbReference type="CDD" id="cd17928">
    <property type="entry name" value="DEXDc_SecA"/>
    <property type="match status" value="1"/>
</dbReference>
<dbReference type="CDD" id="cd18803">
    <property type="entry name" value="SF2_C_secA"/>
    <property type="match status" value="1"/>
</dbReference>
<dbReference type="FunFam" id="1.10.3060.10:FF:000001">
    <property type="entry name" value="Preprotein translocase subunit SecA"/>
    <property type="match status" value="1"/>
</dbReference>
<dbReference type="FunFam" id="3.40.50.300:FF:000081">
    <property type="entry name" value="Preprotein translocase subunit SecA"/>
    <property type="match status" value="1"/>
</dbReference>
<dbReference type="FunFam" id="3.40.50.300:FF:000113">
    <property type="entry name" value="Preprotein translocase subunit SecA"/>
    <property type="match status" value="1"/>
</dbReference>
<dbReference type="FunFam" id="3.90.1440.10:FF:000001">
    <property type="entry name" value="Preprotein translocase subunit SecA"/>
    <property type="match status" value="1"/>
</dbReference>
<dbReference type="Gene3D" id="1.10.3060.10">
    <property type="entry name" value="Helical scaffold and wing domains of SecA"/>
    <property type="match status" value="1"/>
</dbReference>
<dbReference type="Gene3D" id="3.40.50.300">
    <property type="entry name" value="P-loop containing nucleotide triphosphate hydrolases"/>
    <property type="match status" value="2"/>
</dbReference>
<dbReference type="Gene3D" id="3.90.1440.10">
    <property type="entry name" value="SecA, preprotein cross-linking domain"/>
    <property type="match status" value="1"/>
</dbReference>
<dbReference type="HAMAP" id="MF_01382">
    <property type="entry name" value="SecA"/>
    <property type="match status" value="1"/>
</dbReference>
<dbReference type="InterPro" id="IPR014001">
    <property type="entry name" value="Helicase_ATP-bd"/>
</dbReference>
<dbReference type="InterPro" id="IPR001650">
    <property type="entry name" value="Helicase_C-like"/>
</dbReference>
<dbReference type="InterPro" id="IPR027417">
    <property type="entry name" value="P-loop_NTPase"/>
</dbReference>
<dbReference type="InterPro" id="IPR004027">
    <property type="entry name" value="SEC_C_motif"/>
</dbReference>
<dbReference type="InterPro" id="IPR000185">
    <property type="entry name" value="SecA"/>
</dbReference>
<dbReference type="InterPro" id="IPR020937">
    <property type="entry name" value="SecA_CS"/>
</dbReference>
<dbReference type="InterPro" id="IPR011115">
    <property type="entry name" value="SecA_DEAD"/>
</dbReference>
<dbReference type="InterPro" id="IPR014018">
    <property type="entry name" value="SecA_motor_DEAD"/>
</dbReference>
<dbReference type="InterPro" id="IPR011130">
    <property type="entry name" value="SecA_preprotein_X-link_dom"/>
</dbReference>
<dbReference type="InterPro" id="IPR044722">
    <property type="entry name" value="SecA_SF2_C"/>
</dbReference>
<dbReference type="InterPro" id="IPR011116">
    <property type="entry name" value="SecA_Wing/Scaffold"/>
</dbReference>
<dbReference type="InterPro" id="IPR036266">
    <property type="entry name" value="SecA_Wing/Scaffold_sf"/>
</dbReference>
<dbReference type="InterPro" id="IPR036670">
    <property type="entry name" value="SecA_X-link_sf"/>
</dbReference>
<dbReference type="NCBIfam" id="NF009538">
    <property type="entry name" value="PRK12904.1"/>
    <property type="match status" value="1"/>
</dbReference>
<dbReference type="NCBIfam" id="TIGR00963">
    <property type="entry name" value="secA"/>
    <property type="match status" value="1"/>
</dbReference>
<dbReference type="PANTHER" id="PTHR30612:SF0">
    <property type="entry name" value="CHLOROPLAST PROTEIN-TRANSPORTING ATPASE"/>
    <property type="match status" value="1"/>
</dbReference>
<dbReference type="PANTHER" id="PTHR30612">
    <property type="entry name" value="SECA INNER MEMBRANE COMPONENT OF SEC PROTEIN SECRETION SYSTEM"/>
    <property type="match status" value="1"/>
</dbReference>
<dbReference type="Pfam" id="PF21090">
    <property type="entry name" value="P-loop_SecA"/>
    <property type="match status" value="1"/>
</dbReference>
<dbReference type="Pfam" id="PF02810">
    <property type="entry name" value="SEC-C"/>
    <property type="match status" value="1"/>
</dbReference>
<dbReference type="Pfam" id="PF07517">
    <property type="entry name" value="SecA_DEAD"/>
    <property type="match status" value="1"/>
</dbReference>
<dbReference type="Pfam" id="PF01043">
    <property type="entry name" value="SecA_PP_bind"/>
    <property type="match status" value="1"/>
</dbReference>
<dbReference type="Pfam" id="PF07516">
    <property type="entry name" value="SecA_SW"/>
    <property type="match status" value="1"/>
</dbReference>
<dbReference type="PRINTS" id="PR00906">
    <property type="entry name" value="SECA"/>
</dbReference>
<dbReference type="SMART" id="SM00957">
    <property type="entry name" value="SecA_DEAD"/>
    <property type="match status" value="1"/>
</dbReference>
<dbReference type="SMART" id="SM00958">
    <property type="entry name" value="SecA_PP_bind"/>
    <property type="match status" value="1"/>
</dbReference>
<dbReference type="SUPFAM" id="SSF81886">
    <property type="entry name" value="Helical scaffold and wing domains of SecA"/>
    <property type="match status" value="1"/>
</dbReference>
<dbReference type="SUPFAM" id="SSF52540">
    <property type="entry name" value="P-loop containing nucleoside triphosphate hydrolases"/>
    <property type="match status" value="2"/>
</dbReference>
<dbReference type="SUPFAM" id="SSF81767">
    <property type="entry name" value="Pre-protein crosslinking domain of SecA"/>
    <property type="match status" value="1"/>
</dbReference>
<dbReference type="PROSITE" id="PS01312">
    <property type="entry name" value="SECA"/>
    <property type="match status" value="1"/>
</dbReference>
<dbReference type="PROSITE" id="PS51196">
    <property type="entry name" value="SECA_MOTOR_DEAD"/>
    <property type="match status" value="1"/>
</dbReference>
<name>SECA_VIBC1</name>
<gene>
    <name evidence="1" type="primary">secA</name>
    <name type="ordered locus">VIBHAR_00909</name>
</gene>
<evidence type="ECO:0000255" key="1">
    <source>
        <dbReference type="HAMAP-Rule" id="MF_01382"/>
    </source>
</evidence>
<evidence type="ECO:0000256" key="2">
    <source>
        <dbReference type="SAM" id="MobiDB-lite"/>
    </source>
</evidence>
<keyword id="KW-0067">ATP-binding</keyword>
<keyword id="KW-0997">Cell inner membrane</keyword>
<keyword id="KW-1003">Cell membrane</keyword>
<keyword id="KW-0963">Cytoplasm</keyword>
<keyword id="KW-0472">Membrane</keyword>
<keyword id="KW-0479">Metal-binding</keyword>
<keyword id="KW-0547">Nucleotide-binding</keyword>
<keyword id="KW-0653">Protein transport</keyword>
<keyword id="KW-1278">Translocase</keyword>
<keyword id="KW-0811">Translocation</keyword>
<keyword id="KW-0813">Transport</keyword>
<keyword id="KW-0862">Zinc</keyword>
<feature type="chain" id="PRO_0000321034" description="Protein translocase subunit SecA">
    <location>
        <begin position="1"/>
        <end position="909"/>
    </location>
</feature>
<feature type="region of interest" description="Disordered" evidence="2">
    <location>
        <begin position="834"/>
        <end position="909"/>
    </location>
</feature>
<feature type="compositionally biased region" description="Basic and acidic residues" evidence="2">
    <location>
        <begin position="836"/>
        <end position="853"/>
    </location>
</feature>
<feature type="compositionally biased region" description="Low complexity" evidence="2">
    <location>
        <begin position="854"/>
        <end position="863"/>
    </location>
</feature>
<feature type="compositionally biased region" description="Basic and acidic residues" evidence="2">
    <location>
        <begin position="874"/>
        <end position="889"/>
    </location>
</feature>
<feature type="compositionally biased region" description="Basic residues" evidence="2">
    <location>
        <begin position="899"/>
        <end position="909"/>
    </location>
</feature>
<feature type="binding site" evidence="1">
    <location>
        <position position="87"/>
    </location>
    <ligand>
        <name>ATP</name>
        <dbReference type="ChEBI" id="CHEBI:30616"/>
    </ligand>
</feature>
<feature type="binding site" evidence="1">
    <location>
        <begin position="105"/>
        <end position="109"/>
    </location>
    <ligand>
        <name>ATP</name>
        <dbReference type="ChEBI" id="CHEBI:30616"/>
    </ligand>
</feature>
<feature type="binding site" evidence="1">
    <location>
        <position position="513"/>
    </location>
    <ligand>
        <name>ATP</name>
        <dbReference type="ChEBI" id="CHEBI:30616"/>
    </ligand>
</feature>
<feature type="binding site" evidence="1">
    <location>
        <position position="893"/>
    </location>
    <ligand>
        <name>Zn(2+)</name>
        <dbReference type="ChEBI" id="CHEBI:29105"/>
    </ligand>
</feature>
<feature type="binding site" evidence="1">
    <location>
        <position position="895"/>
    </location>
    <ligand>
        <name>Zn(2+)</name>
        <dbReference type="ChEBI" id="CHEBI:29105"/>
    </ligand>
</feature>
<feature type="binding site" evidence="1">
    <location>
        <position position="904"/>
    </location>
    <ligand>
        <name>Zn(2+)</name>
        <dbReference type="ChEBI" id="CHEBI:29105"/>
    </ligand>
</feature>
<feature type="binding site" evidence="1">
    <location>
        <position position="905"/>
    </location>
    <ligand>
        <name>Zn(2+)</name>
        <dbReference type="ChEBI" id="CHEBI:29105"/>
    </ligand>
</feature>
<organism>
    <name type="scientific">Vibrio campbellii (strain ATCC BAA-1116)</name>
    <dbReference type="NCBI Taxonomy" id="2902295"/>
    <lineage>
        <taxon>Bacteria</taxon>
        <taxon>Pseudomonadati</taxon>
        <taxon>Pseudomonadota</taxon>
        <taxon>Gammaproteobacteria</taxon>
        <taxon>Vibrionales</taxon>
        <taxon>Vibrionaceae</taxon>
        <taxon>Vibrio</taxon>
    </lineage>
</organism>
<protein>
    <recommendedName>
        <fullName evidence="1">Protein translocase subunit SecA</fullName>
        <ecNumber evidence="1">7.4.2.8</ecNumber>
    </recommendedName>
</protein>
<proteinExistence type="inferred from homology"/>